<keyword id="KW-0131">Cell cycle</keyword>
<keyword id="KW-0132">Cell division</keyword>
<keyword id="KW-0342">GTP-binding</keyword>
<keyword id="KW-0460">Magnesium</keyword>
<keyword id="KW-0479">Metal-binding</keyword>
<keyword id="KW-0547">Nucleotide-binding</keyword>
<keyword id="KW-0717">Septation</keyword>
<accession>Q92JC9</accession>
<gene>
    <name evidence="1" type="primary">engB</name>
    <name type="ordered locus">RC0138</name>
</gene>
<reference key="1">
    <citation type="journal article" date="2001" name="Science">
        <title>Mechanisms of evolution in Rickettsia conorii and R. prowazekii.</title>
        <authorList>
            <person name="Ogata H."/>
            <person name="Audic S."/>
            <person name="Renesto-Audiffren P."/>
            <person name="Fournier P.-E."/>
            <person name="Barbe V."/>
            <person name="Samson D."/>
            <person name="Roux V."/>
            <person name="Cossart P."/>
            <person name="Weissenbach J."/>
            <person name="Claverie J.-M."/>
            <person name="Raoult D."/>
        </authorList>
    </citation>
    <scope>NUCLEOTIDE SEQUENCE [LARGE SCALE GENOMIC DNA]</scope>
    <source>
        <strain>ATCC VR-613 / Malish 7</strain>
    </source>
</reference>
<proteinExistence type="inferred from homology"/>
<organism>
    <name type="scientific">Rickettsia conorii (strain ATCC VR-613 / Malish 7)</name>
    <dbReference type="NCBI Taxonomy" id="272944"/>
    <lineage>
        <taxon>Bacteria</taxon>
        <taxon>Pseudomonadati</taxon>
        <taxon>Pseudomonadota</taxon>
        <taxon>Alphaproteobacteria</taxon>
        <taxon>Rickettsiales</taxon>
        <taxon>Rickettsiaceae</taxon>
        <taxon>Rickettsieae</taxon>
        <taxon>Rickettsia</taxon>
        <taxon>spotted fever group</taxon>
    </lineage>
</organism>
<protein>
    <recommendedName>
        <fullName evidence="1">Probable GTP-binding protein EngB</fullName>
    </recommendedName>
</protein>
<sequence length="212" mass="23867">MTTQKIVPTKSTDGSKLFRHQAKFVAGAMNINQILNFSLPEIAFVGKSNVGKSSLINTICNNKNLAKVSNTPGRTRQINFFNLADKLIIVDLPGYGFANVPISVKEQWGVLISYYLRNSYNLRLVNLLIDSRRGIKENDKKVADLLLANKREFQIIFTKSDKVTDHKNLHDEAQNFLATLNYSCNVMYVSNRSKEGARELKASLAKCIKPQK</sequence>
<evidence type="ECO:0000255" key="1">
    <source>
        <dbReference type="HAMAP-Rule" id="MF_00321"/>
    </source>
</evidence>
<evidence type="ECO:0000305" key="2"/>
<name>ENGB_RICCN</name>
<comment type="function">
    <text evidence="1">Necessary for normal cell division and for the maintenance of normal septation.</text>
</comment>
<comment type="cofactor">
    <cofactor evidence="1">
        <name>Mg(2+)</name>
        <dbReference type="ChEBI" id="CHEBI:18420"/>
    </cofactor>
</comment>
<comment type="similarity">
    <text evidence="1">Belongs to the TRAFAC class TrmE-Era-EngA-EngB-Septin-like GTPase superfamily. EngB GTPase family.</text>
</comment>
<comment type="sequence caution" evidence="2">
    <conflict type="erroneous initiation">
        <sequence resource="EMBL-CDS" id="AAL02676"/>
    </conflict>
</comment>
<feature type="chain" id="PRO_0000157776" description="Probable GTP-binding protein EngB">
    <location>
        <begin position="1"/>
        <end position="212"/>
    </location>
</feature>
<feature type="domain" description="EngB-type G" evidence="1">
    <location>
        <begin position="38"/>
        <end position="210"/>
    </location>
</feature>
<feature type="binding site" evidence="1">
    <location>
        <begin position="46"/>
        <end position="53"/>
    </location>
    <ligand>
        <name>GTP</name>
        <dbReference type="ChEBI" id="CHEBI:37565"/>
    </ligand>
</feature>
<feature type="binding site" evidence="1">
    <location>
        <position position="53"/>
    </location>
    <ligand>
        <name>Mg(2+)</name>
        <dbReference type="ChEBI" id="CHEBI:18420"/>
    </ligand>
</feature>
<feature type="binding site" evidence="1">
    <location>
        <begin position="73"/>
        <end position="77"/>
    </location>
    <ligand>
        <name>GTP</name>
        <dbReference type="ChEBI" id="CHEBI:37565"/>
    </ligand>
</feature>
<feature type="binding site" evidence="1">
    <location>
        <position position="75"/>
    </location>
    <ligand>
        <name>Mg(2+)</name>
        <dbReference type="ChEBI" id="CHEBI:18420"/>
    </ligand>
</feature>
<feature type="binding site" evidence="1">
    <location>
        <begin position="91"/>
        <end position="94"/>
    </location>
    <ligand>
        <name>GTP</name>
        <dbReference type="ChEBI" id="CHEBI:37565"/>
    </ligand>
</feature>
<feature type="binding site" evidence="1">
    <location>
        <begin position="158"/>
        <end position="161"/>
    </location>
    <ligand>
        <name>GTP</name>
        <dbReference type="ChEBI" id="CHEBI:37565"/>
    </ligand>
</feature>
<feature type="binding site" evidence="1">
    <location>
        <begin position="189"/>
        <end position="191"/>
    </location>
    <ligand>
        <name>GTP</name>
        <dbReference type="ChEBI" id="CHEBI:37565"/>
    </ligand>
</feature>
<dbReference type="EMBL" id="AE006914">
    <property type="protein sequence ID" value="AAL02676.1"/>
    <property type="status" value="ALT_INIT"/>
    <property type="molecule type" value="Genomic_DNA"/>
</dbReference>
<dbReference type="PIR" id="B97717">
    <property type="entry name" value="B97717"/>
</dbReference>
<dbReference type="SMR" id="Q92JC9"/>
<dbReference type="GeneID" id="928056"/>
<dbReference type="KEGG" id="rco:RC0138"/>
<dbReference type="PATRIC" id="fig|272944.4.peg.162"/>
<dbReference type="HOGENOM" id="CLU_033732_2_0_5"/>
<dbReference type="Proteomes" id="UP000000816">
    <property type="component" value="Chromosome"/>
</dbReference>
<dbReference type="GO" id="GO:0005525">
    <property type="term" value="F:GTP binding"/>
    <property type="evidence" value="ECO:0007669"/>
    <property type="project" value="UniProtKB-UniRule"/>
</dbReference>
<dbReference type="GO" id="GO:0046872">
    <property type="term" value="F:metal ion binding"/>
    <property type="evidence" value="ECO:0007669"/>
    <property type="project" value="UniProtKB-KW"/>
</dbReference>
<dbReference type="GO" id="GO:0000917">
    <property type="term" value="P:division septum assembly"/>
    <property type="evidence" value="ECO:0007669"/>
    <property type="project" value="UniProtKB-KW"/>
</dbReference>
<dbReference type="CDD" id="cd01876">
    <property type="entry name" value="YihA_EngB"/>
    <property type="match status" value="1"/>
</dbReference>
<dbReference type="Gene3D" id="3.40.50.300">
    <property type="entry name" value="P-loop containing nucleotide triphosphate hydrolases"/>
    <property type="match status" value="1"/>
</dbReference>
<dbReference type="HAMAP" id="MF_00321">
    <property type="entry name" value="GTPase_EngB"/>
    <property type="match status" value="1"/>
</dbReference>
<dbReference type="InterPro" id="IPR030393">
    <property type="entry name" value="G_ENGB_dom"/>
</dbReference>
<dbReference type="InterPro" id="IPR006073">
    <property type="entry name" value="GTP-bd"/>
</dbReference>
<dbReference type="InterPro" id="IPR019987">
    <property type="entry name" value="GTP-bd_ribosome_bio_YsxC"/>
</dbReference>
<dbReference type="InterPro" id="IPR027417">
    <property type="entry name" value="P-loop_NTPase"/>
</dbReference>
<dbReference type="NCBIfam" id="TIGR03598">
    <property type="entry name" value="GTPase_YsxC"/>
    <property type="match status" value="1"/>
</dbReference>
<dbReference type="PANTHER" id="PTHR11649:SF13">
    <property type="entry name" value="ENGB-TYPE G DOMAIN-CONTAINING PROTEIN"/>
    <property type="match status" value="1"/>
</dbReference>
<dbReference type="PANTHER" id="PTHR11649">
    <property type="entry name" value="MSS1/TRME-RELATED GTP-BINDING PROTEIN"/>
    <property type="match status" value="1"/>
</dbReference>
<dbReference type="Pfam" id="PF01926">
    <property type="entry name" value="MMR_HSR1"/>
    <property type="match status" value="1"/>
</dbReference>
<dbReference type="SUPFAM" id="SSF52540">
    <property type="entry name" value="P-loop containing nucleoside triphosphate hydrolases"/>
    <property type="match status" value="1"/>
</dbReference>
<dbReference type="PROSITE" id="PS51706">
    <property type="entry name" value="G_ENGB"/>
    <property type="match status" value="1"/>
</dbReference>